<sequence length="222" mass="24065">MAGQISPTRSALLASKASLKTATSGADLLKRKRDALIGEFFALVKDALAAREQLAGVSKGAYTSLFGAKAWDSPEAVESLSLAGTSDYAVDMQIESIYGVKVPRIKIPERQAAAAFSPINVGARTIQAATDFGTVLEAIVRVAATETKLRRIGEEIKKTSRRVNALEQVVIPGIRDDIRFIRGVLDQREREESFRLKKIKAKLEREKNKENAQAGQHGSAAD</sequence>
<comment type="function">
    <text evidence="1">Produces ATP from ADP in the presence of a proton gradient across the membrane.</text>
</comment>
<comment type="similarity">
    <text evidence="1">Belongs to the V-ATPase D subunit family.</text>
</comment>
<proteinExistence type="inferred from homology"/>
<reference key="1">
    <citation type="submission" date="2006-04" db="EMBL/GenBank/DDBJ databases">
        <title>Complete sequence of chromosome of Deinococcus geothermalis DSM 11300.</title>
        <authorList>
            <person name="Copeland A."/>
            <person name="Lucas S."/>
            <person name="Lapidus A."/>
            <person name="Barry K."/>
            <person name="Detter J.C."/>
            <person name="Glavina del Rio T."/>
            <person name="Hammon N."/>
            <person name="Israni S."/>
            <person name="Dalin E."/>
            <person name="Tice H."/>
            <person name="Pitluck S."/>
            <person name="Brettin T."/>
            <person name="Bruce D."/>
            <person name="Han C."/>
            <person name="Tapia R."/>
            <person name="Saunders E."/>
            <person name="Gilna P."/>
            <person name="Schmutz J."/>
            <person name="Larimer F."/>
            <person name="Land M."/>
            <person name="Hauser L."/>
            <person name="Kyrpides N."/>
            <person name="Kim E."/>
            <person name="Daly M.J."/>
            <person name="Fredrickson J.K."/>
            <person name="Makarova K.S."/>
            <person name="Gaidamakova E.K."/>
            <person name="Zhai M."/>
            <person name="Richardson P."/>
        </authorList>
    </citation>
    <scope>NUCLEOTIDE SEQUENCE [LARGE SCALE GENOMIC DNA]</scope>
    <source>
        <strain>DSM 11300 / CIP 105573 / AG-3a</strain>
    </source>
</reference>
<protein>
    <recommendedName>
        <fullName evidence="1">V-type ATP synthase subunit D</fullName>
    </recommendedName>
    <alternativeName>
        <fullName evidence="1">V-ATPase subunit D</fullName>
    </alternativeName>
</protein>
<feature type="chain" id="PRO_1000059156" description="V-type ATP synthase subunit D">
    <location>
        <begin position="1"/>
        <end position="222"/>
    </location>
</feature>
<name>VATD_DEIGD</name>
<accession>Q1IWP5</accession>
<keyword id="KW-0066">ATP synthesis</keyword>
<keyword id="KW-0375">Hydrogen ion transport</keyword>
<keyword id="KW-0406">Ion transport</keyword>
<keyword id="KW-0813">Transport</keyword>
<dbReference type="EMBL" id="CP000359">
    <property type="protein sequence ID" value="ABF46339.1"/>
    <property type="molecule type" value="Genomic_DNA"/>
</dbReference>
<dbReference type="RefSeq" id="WP_011531165.1">
    <property type="nucleotide sequence ID" value="NC_008025.1"/>
</dbReference>
<dbReference type="SMR" id="Q1IWP5"/>
<dbReference type="STRING" id="319795.Dgeo_2045"/>
<dbReference type="KEGG" id="dge:Dgeo_2045"/>
<dbReference type="eggNOG" id="COG1394">
    <property type="taxonomic scope" value="Bacteria"/>
</dbReference>
<dbReference type="HOGENOM" id="CLU_069688_2_1_0"/>
<dbReference type="Proteomes" id="UP000002431">
    <property type="component" value="Chromosome"/>
</dbReference>
<dbReference type="GO" id="GO:0005524">
    <property type="term" value="F:ATP binding"/>
    <property type="evidence" value="ECO:0007669"/>
    <property type="project" value="UniProtKB-UniRule"/>
</dbReference>
<dbReference type="GO" id="GO:0046933">
    <property type="term" value="F:proton-transporting ATP synthase activity, rotational mechanism"/>
    <property type="evidence" value="ECO:0007669"/>
    <property type="project" value="UniProtKB-UniRule"/>
</dbReference>
<dbReference type="GO" id="GO:0046961">
    <property type="term" value="F:proton-transporting ATPase activity, rotational mechanism"/>
    <property type="evidence" value="ECO:0007669"/>
    <property type="project" value="InterPro"/>
</dbReference>
<dbReference type="GO" id="GO:0042777">
    <property type="term" value="P:proton motive force-driven plasma membrane ATP synthesis"/>
    <property type="evidence" value="ECO:0007669"/>
    <property type="project" value="UniProtKB-UniRule"/>
</dbReference>
<dbReference type="Gene3D" id="1.10.287.3240">
    <property type="match status" value="1"/>
</dbReference>
<dbReference type="HAMAP" id="MF_00271">
    <property type="entry name" value="ATP_synth_D_arch"/>
    <property type="match status" value="1"/>
</dbReference>
<dbReference type="InterPro" id="IPR002699">
    <property type="entry name" value="V_ATPase_D"/>
</dbReference>
<dbReference type="NCBIfam" id="TIGR00309">
    <property type="entry name" value="V_ATPase_subD"/>
    <property type="match status" value="1"/>
</dbReference>
<dbReference type="PANTHER" id="PTHR11671">
    <property type="entry name" value="V-TYPE ATP SYNTHASE SUBUNIT D"/>
    <property type="match status" value="1"/>
</dbReference>
<dbReference type="Pfam" id="PF01813">
    <property type="entry name" value="ATP-synt_D"/>
    <property type="match status" value="1"/>
</dbReference>
<evidence type="ECO:0000255" key="1">
    <source>
        <dbReference type="HAMAP-Rule" id="MF_00271"/>
    </source>
</evidence>
<organism>
    <name type="scientific">Deinococcus geothermalis (strain DSM 11300 / CIP 105573 / AG-3a)</name>
    <dbReference type="NCBI Taxonomy" id="319795"/>
    <lineage>
        <taxon>Bacteria</taxon>
        <taxon>Thermotogati</taxon>
        <taxon>Deinococcota</taxon>
        <taxon>Deinococci</taxon>
        <taxon>Deinococcales</taxon>
        <taxon>Deinococcaceae</taxon>
        <taxon>Deinococcus</taxon>
    </lineage>
</organism>
<gene>
    <name evidence="1" type="primary">atpD</name>
    <name type="ordered locus">Dgeo_2045</name>
</gene>